<name>ZAPD_AROAE</name>
<sequence>MRAQPVISYEYPLNERIRTLLRLEDLYAKIAHFLGGDAPQDHHVALLTLFEVLEVAGRADLKVDLVQELERQRQILISFRHNPEISEQALSGALYEIEQASSSLLAMAGKIGQYLRENEWLMAIRSRASIPGGVCQFDLPSYHYWLNRDPEQRRGDLEGWLRPMIPIREGLTIVLRLLRASAQPERQLARGGTYQLTMGGRGAQMLQLRLAPAEAVVPEISANKYAINIRFMLSETVVRPRLAERDIPFEITFCSL</sequence>
<evidence type="ECO:0000255" key="1">
    <source>
        <dbReference type="HAMAP-Rule" id="MF_01092"/>
    </source>
</evidence>
<reference key="1">
    <citation type="journal article" date="2005" name="Arch. Microbiol.">
        <title>The genome sequence of an anaerobic aromatic-degrading denitrifying bacterium, strain EbN1.</title>
        <authorList>
            <person name="Rabus R."/>
            <person name="Kube M."/>
            <person name="Heider J."/>
            <person name="Beck A."/>
            <person name="Heitmann K."/>
            <person name="Widdel F."/>
            <person name="Reinhardt R."/>
        </authorList>
    </citation>
    <scope>NUCLEOTIDE SEQUENCE [LARGE SCALE GENOMIC DNA]</scope>
    <source>
        <strain>DSM 19018 / LMG 30748 / EbN1</strain>
    </source>
</reference>
<dbReference type="EMBL" id="CR555306">
    <property type="protein sequence ID" value="CAI08449.1"/>
    <property type="molecule type" value="Genomic_DNA"/>
</dbReference>
<dbReference type="SMR" id="Q5P2L5"/>
<dbReference type="STRING" id="76114.ebA4104"/>
<dbReference type="KEGG" id="eba:ebA4104"/>
<dbReference type="eggNOG" id="COG4582">
    <property type="taxonomic scope" value="Bacteria"/>
</dbReference>
<dbReference type="HOGENOM" id="CLU_076303_0_1_4"/>
<dbReference type="Proteomes" id="UP000006552">
    <property type="component" value="Chromosome"/>
</dbReference>
<dbReference type="GO" id="GO:0032153">
    <property type="term" value="C:cell division site"/>
    <property type="evidence" value="ECO:0007669"/>
    <property type="project" value="TreeGrafter"/>
</dbReference>
<dbReference type="GO" id="GO:0005737">
    <property type="term" value="C:cytoplasm"/>
    <property type="evidence" value="ECO:0007669"/>
    <property type="project" value="UniProtKB-SubCell"/>
</dbReference>
<dbReference type="GO" id="GO:0000917">
    <property type="term" value="P:division septum assembly"/>
    <property type="evidence" value="ECO:0007669"/>
    <property type="project" value="UniProtKB-KW"/>
</dbReference>
<dbReference type="GO" id="GO:0043093">
    <property type="term" value="P:FtsZ-dependent cytokinesis"/>
    <property type="evidence" value="ECO:0007669"/>
    <property type="project" value="UniProtKB-UniRule"/>
</dbReference>
<dbReference type="Gene3D" id="1.10.3900.10">
    <property type="entry name" value="YacF-like"/>
    <property type="match status" value="1"/>
</dbReference>
<dbReference type="Gene3D" id="2.60.440.10">
    <property type="entry name" value="YacF-like domains"/>
    <property type="match status" value="1"/>
</dbReference>
<dbReference type="HAMAP" id="MF_01092">
    <property type="entry name" value="ZapD"/>
    <property type="match status" value="1"/>
</dbReference>
<dbReference type="InterPro" id="IPR009777">
    <property type="entry name" value="ZapD"/>
</dbReference>
<dbReference type="InterPro" id="IPR027462">
    <property type="entry name" value="ZapD_C"/>
</dbReference>
<dbReference type="InterPro" id="IPR036268">
    <property type="entry name" value="ZapD_sf"/>
</dbReference>
<dbReference type="NCBIfam" id="NF003656">
    <property type="entry name" value="PRK05287.1-4"/>
    <property type="match status" value="1"/>
</dbReference>
<dbReference type="PANTHER" id="PTHR39455">
    <property type="entry name" value="CELL DIVISION PROTEIN ZAPD"/>
    <property type="match status" value="1"/>
</dbReference>
<dbReference type="PANTHER" id="PTHR39455:SF1">
    <property type="entry name" value="CELL DIVISION PROTEIN ZAPD"/>
    <property type="match status" value="1"/>
</dbReference>
<dbReference type="Pfam" id="PF07072">
    <property type="entry name" value="ZapD"/>
    <property type="match status" value="1"/>
</dbReference>
<dbReference type="SUPFAM" id="SSF160950">
    <property type="entry name" value="YacF-like"/>
    <property type="match status" value="1"/>
</dbReference>
<proteinExistence type="inferred from homology"/>
<protein>
    <recommendedName>
        <fullName evidence="1">Cell division protein ZapD</fullName>
    </recommendedName>
    <alternativeName>
        <fullName evidence="1">Z ring-associated protein D</fullName>
    </alternativeName>
</protein>
<keyword id="KW-0131">Cell cycle</keyword>
<keyword id="KW-0132">Cell division</keyword>
<keyword id="KW-0963">Cytoplasm</keyword>
<keyword id="KW-1185">Reference proteome</keyword>
<keyword id="KW-0717">Septation</keyword>
<accession>Q5P2L5</accession>
<feature type="chain" id="PRO_0000211659" description="Cell division protein ZapD">
    <location>
        <begin position="1"/>
        <end position="256"/>
    </location>
</feature>
<gene>
    <name evidence="1" type="primary">zapD</name>
    <name type="ordered locus">AZOSEA23240</name>
    <name type="ORF">ebA4104</name>
</gene>
<comment type="function">
    <text evidence="1">Cell division factor that enhances FtsZ-ring assembly. Directly interacts with FtsZ and promotes bundling of FtsZ protofilaments, with a reduction in FtsZ GTPase activity.</text>
</comment>
<comment type="subunit">
    <text evidence="1">Interacts with FtsZ.</text>
</comment>
<comment type="subcellular location">
    <subcellularLocation>
        <location evidence="1">Cytoplasm</location>
    </subcellularLocation>
    <text evidence="1">Localizes to mid-cell in an FtsZ-dependent manner.</text>
</comment>
<comment type="similarity">
    <text evidence="1">Belongs to the ZapD family.</text>
</comment>
<organism>
    <name type="scientific">Aromatoleum aromaticum (strain DSM 19018 / LMG 30748 / EbN1)</name>
    <name type="common">Azoarcus sp. (strain EbN1)</name>
    <dbReference type="NCBI Taxonomy" id="76114"/>
    <lineage>
        <taxon>Bacteria</taxon>
        <taxon>Pseudomonadati</taxon>
        <taxon>Pseudomonadota</taxon>
        <taxon>Betaproteobacteria</taxon>
        <taxon>Rhodocyclales</taxon>
        <taxon>Rhodocyclaceae</taxon>
        <taxon>Aromatoleum</taxon>
    </lineage>
</organism>